<protein>
    <recommendedName>
        <fullName>Pre-mRNA-splicing factor CWC25</fullName>
    </recommendedName>
</protein>
<sequence length="434" mass="50153">MGGGDLNMKKSWHPVLLVNQERVWKAEKVANEEKKMLAQLRKEREEERQLEELHRLQEASTGKKRVEKLDWMYAAPSTEGGALGGARIGERDMEEYLLGKKRVDEVLGQGDKNIGAASREFIALQNANTARDTAAKIREDPLLAIKKQEQAALAALMNRPDIRKQLRAAKKAKETKGREGESKEERKARKRAEKEERRKSKHRYHDSRSPPSDYYDDRDHRRHRDSYDSQDRENRRTYRDRSDRSRTRSESPKREKKEKDYSNRDRDYRRRNDTTRGSFDESPRKGGGNRWGSHGPDGYRRSDHRDDGFRERQRGDRIPPPRHLSYNHSTPDVRPSSPPSSSAAPVNRNTSTLEDQRAARLAAMSASADELYSSRSKSLAARAEEERREQEKDEKMRQKYGKEQASANFFSQQSQLGLGEALQRRGGKGLLKDI</sequence>
<name>CWC25_CRYNJ</name>
<comment type="function">
    <text evidence="1">Involved in pre-mRNA splicing.</text>
</comment>
<comment type="subunit">
    <text evidence="1">Associated with the spliceosome.</text>
</comment>
<comment type="subcellular location">
    <subcellularLocation>
        <location evidence="1">Nucleus</location>
    </subcellularLocation>
</comment>
<comment type="similarity">
    <text evidence="4">Belongs to the CWC25 family.</text>
</comment>
<keyword id="KW-0175">Coiled coil</keyword>
<keyword id="KW-0507">mRNA processing</keyword>
<keyword id="KW-0508">mRNA splicing</keyword>
<keyword id="KW-0539">Nucleus</keyword>
<keyword id="KW-1185">Reference proteome</keyword>
<keyword id="KW-0747">Spliceosome</keyword>
<gene>
    <name type="primary">CWC25</name>
    <name type="ordered locus">CND02200</name>
</gene>
<feature type="chain" id="PRO_0000079587" description="Pre-mRNA-splicing factor CWC25">
    <location>
        <begin position="1"/>
        <end position="434"/>
    </location>
</feature>
<feature type="region of interest" description="Disordered" evidence="3">
    <location>
        <begin position="43"/>
        <end position="63"/>
    </location>
</feature>
<feature type="region of interest" description="Disordered" evidence="3">
    <location>
        <begin position="156"/>
        <end position="412"/>
    </location>
</feature>
<feature type="coiled-coil region" evidence="2">
    <location>
        <begin position="20"/>
        <end position="61"/>
    </location>
</feature>
<feature type="compositionally biased region" description="Basic and acidic residues" evidence="3">
    <location>
        <begin position="43"/>
        <end position="57"/>
    </location>
</feature>
<feature type="compositionally biased region" description="Basic and acidic residues" evidence="3">
    <location>
        <begin position="171"/>
        <end position="198"/>
    </location>
</feature>
<feature type="compositionally biased region" description="Basic and acidic residues" evidence="3">
    <location>
        <begin position="215"/>
        <end position="284"/>
    </location>
</feature>
<feature type="compositionally biased region" description="Basic and acidic residues" evidence="3">
    <location>
        <begin position="297"/>
        <end position="319"/>
    </location>
</feature>
<feature type="compositionally biased region" description="Low complexity" evidence="3">
    <location>
        <begin position="359"/>
        <end position="381"/>
    </location>
</feature>
<feature type="compositionally biased region" description="Basic and acidic residues" evidence="3">
    <location>
        <begin position="382"/>
        <end position="402"/>
    </location>
</feature>
<evidence type="ECO:0000250" key="1"/>
<evidence type="ECO:0000255" key="2"/>
<evidence type="ECO:0000256" key="3">
    <source>
        <dbReference type="SAM" id="MobiDB-lite"/>
    </source>
</evidence>
<evidence type="ECO:0000305" key="4"/>
<accession>P0CM98</accession>
<accession>Q55TN7</accession>
<accession>Q5KIP8</accession>
<dbReference type="EMBL" id="AE017344">
    <property type="protein sequence ID" value="AAW42990.1"/>
    <property type="molecule type" value="Genomic_DNA"/>
</dbReference>
<dbReference type="RefSeq" id="XP_570297.1">
    <property type="nucleotide sequence ID" value="XM_570297.1"/>
</dbReference>
<dbReference type="SMR" id="P0CM98"/>
<dbReference type="STRING" id="214684.P0CM98"/>
<dbReference type="PaxDb" id="214684-P0CM98"/>
<dbReference type="EnsemblFungi" id="AAW42990">
    <property type="protein sequence ID" value="AAW42990"/>
    <property type="gene ID" value="CND02200"/>
</dbReference>
<dbReference type="GeneID" id="3257215"/>
<dbReference type="KEGG" id="cne:CND02200"/>
<dbReference type="VEuPathDB" id="FungiDB:CND02200"/>
<dbReference type="eggNOG" id="KOG3869">
    <property type="taxonomic scope" value="Eukaryota"/>
</dbReference>
<dbReference type="HOGENOM" id="CLU_025093_0_0_1"/>
<dbReference type="InParanoid" id="P0CM98"/>
<dbReference type="OMA" id="SWHPHTM"/>
<dbReference type="OrthoDB" id="21123at2759"/>
<dbReference type="Proteomes" id="UP000002149">
    <property type="component" value="Chromosome 4"/>
</dbReference>
<dbReference type="GO" id="GO:0000974">
    <property type="term" value="C:Prp19 complex"/>
    <property type="evidence" value="ECO:0007669"/>
    <property type="project" value="EnsemblFungi"/>
</dbReference>
<dbReference type="GO" id="GO:0005684">
    <property type="term" value="C:U2-type spliceosomal complex"/>
    <property type="evidence" value="ECO:0000318"/>
    <property type="project" value="GO_Central"/>
</dbReference>
<dbReference type="GO" id="GO:0000398">
    <property type="term" value="P:mRNA splicing, via spliceosome"/>
    <property type="evidence" value="ECO:0000318"/>
    <property type="project" value="GO_Central"/>
</dbReference>
<dbReference type="InterPro" id="IPR019339">
    <property type="entry name" value="CIR_N_dom"/>
</dbReference>
<dbReference type="InterPro" id="IPR022209">
    <property type="entry name" value="CWC25"/>
</dbReference>
<dbReference type="InterPro" id="IPR051376">
    <property type="entry name" value="CWC25_splicing_factor"/>
</dbReference>
<dbReference type="PANTHER" id="PTHR16196">
    <property type="entry name" value="CELL CYCLE CONTROL PROTEIN CWF25"/>
    <property type="match status" value="1"/>
</dbReference>
<dbReference type="PANTHER" id="PTHR16196:SF0">
    <property type="entry name" value="PRE-MRNA-SPLICING FACTOR CWC25 HOMOLOG"/>
    <property type="match status" value="1"/>
</dbReference>
<dbReference type="Pfam" id="PF10197">
    <property type="entry name" value="Cir_N"/>
    <property type="match status" value="1"/>
</dbReference>
<dbReference type="Pfam" id="PF12542">
    <property type="entry name" value="CWC25"/>
    <property type="match status" value="1"/>
</dbReference>
<dbReference type="SMART" id="SM01083">
    <property type="entry name" value="Cir_N"/>
    <property type="match status" value="1"/>
</dbReference>
<proteinExistence type="inferred from homology"/>
<reference key="1">
    <citation type="journal article" date="2005" name="Science">
        <title>The genome of the basidiomycetous yeast and human pathogen Cryptococcus neoformans.</title>
        <authorList>
            <person name="Loftus B.J."/>
            <person name="Fung E."/>
            <person name="Roncaglia P."/>
            <person name="Rowley D."/>
            <person name="Amedeo P."/>
            <person name="Bruno D."/>
            <person name="Vamathevan J."/>
            <person name="Miranda M."/>
            <person name="Anderson I.J."/>
            <person name="Fraser J.A."/>
            <person name="Allen J.E."/>
            <person name="Bosdet I.E."/>
            <person name="Brent M.R."/>
            <person name="Chiu R."/>
            <person name="Doering T.L."/>
            <person name="Donlin M.J."/>
            <person name="D'Souza C.A."/>
            <person name="Fox D.S."/>
            <person name="Grinberg V."/>
            <person name="Fu J."/>
            <person name="Fukushima M."/>
            <person name="Haas B.J."/>
            <person name="Huang J.C."/>
            <person name="Janbon G."/>
            <person name="Jones S.J.M."/>
            <person name="Koo H.L."/>
            <person name="Krzywinski M.I."/>
            <person name="Kwon-Chung K.J."/>
            <person name="Lengeler K.B."/>
            <person name="Maiti R."/>
            <person name="Marra M.A."/>
            <person name="Marra R.E."/>
            <person name="Mathewson C.A."/>
            <person name="Mitchell T.G."/>
            <person name="Pertea M."/>
            <person name="Riggs F.R."/>
            <person name="Salzberg S.L."/>
            <person name="Schein J.E."/>
            <person name="Shvartsbeyn A."/>
            <person name="Shin H."/>
            <person name="Shumway M."/>
            <person name="Specht C.A."/>
            <person name="Suh B.B."/>
            <person name="Tenney A."/>
            <person name="Utterback T.R."/>
            <person name="Wickes B.L."/>
            <person name="Wortman J.R."/>
            <person name="Wye N.H."/>
            <person name="Kronstad J.W."/>
            <person name="Lodge J.K."/>
            <person name="Heitman J."/>
            <person name="Davis R.W."/>
            <person name="Fraser C.M."/>
            <person name="Hyman R.W."/>
        </authorList>
    </citation>
    <scope>NUCLEOTIDE SEQUENCE [LARGE SCALE GENOMIC DNA]</scope>
    <source>
        <strain>JEC21 / ATCC MYA-565</strain>
    </source>
</reference>
<organism>
    <name type="scientific">Cryptococcus neoformans var. neoformans serotype D (strain JEC21 / ATCC MYA-565)</name>
    <name type="common">Filobasidiella neoformans</name>
    <dbReference type="NCBI Taxonomy" id="214684"/>
    <lineage>
        <taxon>Eukaryota</taxon>
        <taxon>Fungi</taxon>
        <taxon>Dikarya</taxon>
        <taxon>Basidiomycota</taxon>
        <taxon>Agaricomycotina</taxon>
        <taxon>Tremellomycetes</taxon>
        <taxon>Tremellales</taxon>
        <taxon>Cryptococcaceae</taxon>
        <taxon>Cryptococcus</taxon>
        <taxon>Cryptococcus neoformans species complex</taxon>
    </lineage>
</organism>